<reference key="1">
    <citation type="journal article" date="1997" name="Nature">
        <title>The nucleotide sequence of Saccharomyces cerevisiae chromosome XVI.</title>
        <authorList>
            <person name="Bussey H."/>
            <person name="Storms R.K."/>
            <person name="Ahmed A."/>
            <person name="Albermann K."/>
            <person name="Allen E."/>
            <person name="Ansorge W."/>
            <person name="Araujo R."/>
            <person name="Aparicio A."/>
            <person name="Barrell B.G."/>
            <person name="Badcock K."/>
            <person name="Benes V."/>
            <person name="Botstein D."/>
            <person name="Bowman S."/>
            <person name="Brueckner M."/>
            <person name="Carpenter J."/>
            <person name="Cherry J.M."/>
            <person name="Chung E."/>
            <person name="Churcher C.M."/>
            <person name="Coster F."/>
            <person name="Davis K."/>
            <person name="Davis R.W."/>
            <person name="Dietrich F.S."/>
            <person name="Delius H."/>
            <person name="DiPaolo T."/>
            <person name="Dubois E."/>
            <person name="Duesterhoeft A."/>
            <person name="Duncan M."/>
            <person name="Floeth M."/>
            <person name="Fortin N."/>
            <person name="Friesen J.D."/>
            <person name="Fritz C."/>
            <person name="Goffeau A."/>
            <person name="Hall J."/>
            <person name="Hebling U."/>
            <person name="Heumann K."/>
            <person name="Hilbert H."/>
            <person name="Hillier L.W."/>
            <person name="Hunicke-Smith S."/>
            <person name="Hyman R.W."/>
            <person name="Johnston M."/>
            <person name="Kalman S."/>
            <person name="Kleine K."/>
            <person name="Komp C."/>
            <person name="Kurdi O."/>
            <person name="Lashkari D."/>
            <person name="Lew H."/>
            <person name="Lin A."/>
            <person name="Lin D."/>
            <person name="Louis E.J."/>
            <person name="Marathe R."/>
            <person name="Messenguy F."/>
            <person name="Mewes H.-W."/>
            <person name="Mirtipati S."/>
            <person name="Moestl D."/>
            <person name="Mueller-Auer S."/>
            <person name="Namath A."/>
            <person name="Nentwich U."/>
            <person name="Oefner P."/>
            <person name="Pearson D."/>
            <person name="Petel F.X."/>
            <person name="Pohl T.M."/>
            <person name="Purnelle B."/>
            <person name="Rajandream M.A."/>
            <person name="Rechmann S."/>
            <person name="Rieger M."/>
            <person name="Riles L."/>
            <person name="Roberts D."/>
            <person name="Schaefer M."/>
            <person name="Scharfe M."/>
            <person name="Scherens B."/>
            <person name="Schramm S."/>
            <person name="Schroeder M."/>
            <person name="Sdicu A.-M."/>
            <person name="Tettelin H."/>
            <person name="Urrestarazu L.A."/>
            <person name="Ushinsky S."/>
            <person name="Vierendeels F."/>
            <person name="Vissers S."/>
            <person name="Voss H."/>
            <person name="Walsh S.V."/>
            <person name="Wambutt R."/>
            <person name="Wang Y."/>
            <person name="Wedler E."/>
            <person name="Wedler H."/>
            <person name="Winnett E."/>
            <person name="Zhong W.-W."/>
            <person name="Zollner A."/>
            <person name="Vo D.H."/>
            <person name="Hani J."/>
        </authorList>
    </citation>
    <scope>NUCLEOTIDE SEQUENCE [LARGE SCALE GENOMIC DNA]</scope>
    <source>
        <strain>ATCC 204508 / S288c</strain>
    </source>
</reference>
<reference key="2">
    <citation type="journal article" date="2014" name="G3 (Bethesda)">
        <title>The reference genome sequence of Saccharomyces cerevisiae: Then and now.</title>
        <authorList>
            <person name="Engel S.R."/>
            <person name="Dietrich F.S."/>
            <person name="Fisk D.G."/>
            <person name="Binkley G."/>
            <person name="Balakrishnan R."/>
            <person name="Costanzo M.C."/>
            <person name="Dwight S.S."/>
            <person name="Hitz B.C."/>
            <person name="Karra K."/>
            <person name="Nash R.S."/>
            <person name="Weng S."/>
            <person name="Wong E.D."/>
            <person name="Lloyd P."/>
            <person name="Skrzypek M.S."/>
            <person name="Miyasato S.R."/>
            <person name="Simison M."/>
            <person name="Cherry J.M."/>
        </authorList>
    </citation>
    <scope>GENOME REANNOTATION</scope>
    <source>
        <strain>ATCC 204508 / S288c</strain>
    </source>
</reference>
<reference key="3">
    <citation type="journal article" date="1998" name="Genome Res.">
        <title>Transposable elements and genome organization: a comprehensive survey of retrotransposons revealed by the complete Saccharomyces cerevisiae genome sequence.</title>
        <authorList>
            <person name="Kim J.M."/>
            <person name="Vanguri S."/>
            <person name="Boeke J.D."/>
            <person name="Gabriel A."/>
            <person name="Voytas D.F."/>
        </authorList>
    </citation>
    <scope>NOMENCLATURE</scope>
</reference>
<reference key="4">
    <citation type="journal article" date="2005" name="Cytogenet. Genome Res.">
        <title>Happy together: the life and times of Ty retrotransposons and their hosts.</title>
        <authorList>
            <person name="Lesage P."/>
            <person name="Todeschini A.L."/>
        </authorList>
    </citation>
    <scope>REVIEW</scope>
</reference>
<reference key="5">
    <citation type="journal article" date="2005" name="Cytogenet. Genome Res.">
        <title>Reverse transcriptase and integrase of the Saccharomyces cerevisiae Ty1 element.</title>
        <authorList>
            <person name="Wilhelm F.-X."/>
            <person name="Wilhelm M."/>
            <person name="Gabriel A."/>
        </authorList>
    </citation>
    <scope>REVIEW</scope>
    <scope>DOMAINS</scope>
</reference>
<organism>
    <name type="scientific">Saccharomyces cerevisiae (strain ATCC 204508 / S288c)</name>
    <name type="common">Baker's yeast</name>
    <dbReference type="NCBI Taxonomy" id="559292"/>
    <lineage>
        <taxon>Eukaryota</taxon>
        <taxon>Fungi</taxon>
        <taxon>Dikarya</taxon>
        <taxon>Ascomycota</taxon>
        <taxon>Saccharomycotina</taxon>
        <taxon>Saccharomycetes</taxon>
        <taxon>Saccharomycetales</taxon>
        <taxon>Saccharomycetaceae</taxon>
        <taxon>Saccharomyces</taxon>
    </lineage>
</organism>
<sequence length="1756" mass="198639">MESQQLSNYPHISHGSACASVTSKEVHTNQDPLDVSASKIQEYDKASTKANSQQTTTPASSAVPENPHHASPQPASVPPPQNGPYPQQCMMTQNQANPSGWSFYGHPSMIPYTPYQMSPMYFPPGPQSQFPQYPSSVGTPLSTPSPESGNTFTDSSSADSDMTSTKKYVRPPPMLTSPNDFPNWVKTYIKFLQNSNLGGIIPTVNGKPVRPITDDELTFLYNTFQIFAPSQFLPTWVKDILSVDYTDIMKILSKSIEKMQSDTQEANDIVTLANLQYNGSTPADAFETKVTNIIDRLNNNGIHINNKVACQLIMRGLSGEYKFLRYTRHRHLNMTVAELFLDIHAIYEEQQGSRNSKPNYRRNPSDEKNDSRSYTNTTKPKVIARNPQKTNNSKSKTARAHNVSTSNNSPSTDNDSISKSTTEPIQLNNKHDLHLGQKLTESTVNHTNHSDDELPGHLLLDSGASRTLIRSAHHIHSASSNPDINVVDAQKRNIPINAIGDLQFHFQDNTKTSIKVLHTPNIAYDLLSLNELAAVDITACFTKNVLERSDGTVLAPIVKYGDFYWVSKKYLLPSNISVPTINNVHTSESTRKYPYPFIHRMLAHANAQTIRYSLKNNTITYFNESDVDWSSAIDYQCPDCLIGKSTKHRHIKGSRLKYQNSYEPFQYLHTDIFGPVHNLPKSAPSYFISFTDETTKFRWVYPLHDRREDSILDVFTTILAFIKNQFQASVLVIQMDRGSEYTNRTLHKFLEKKNGITPCYTTTADSRAHGVAERLNRTLLDDCRTQLQCSGLPNHLWFSAIEFSTIVRNSLASPKSKKSARQHAGLAGLDISTLLPFGQPVIVNDHNPNSKIHPRGIPGYALHPSRNSYGYIIYLPSLKKTVDTTNYVILQGKESRLDQFNYDALTFDEDLNRLTASYHSFIASNEIQESNDLNIESDHDFQSDIELHPEQPRNVLSKAVSPTDSTPPSTHTEDSKRVSKTNIRAPREVDPNISESNILPSKKRSSTPQISNIESTGSGGMHKLNVPLLAPMSQSNTHESSHASKSKDFRHSDSYSENETNHTNVPISSTGGTNNKTVPQISDQETEKRIIHRSPSIDASPPENNSSHNIVPIKTPTTVSEQNTEESIIADLPLPDLPPESPTEFPDPFKELPPINSHQTNSSLGGIGDSNAYTTINSKKRSLEDNETEIKVSRDTWNTKNMRSLEPPRSKKRIHLIAAVKAVKSIKPIRTTLRYDEAITYNKDIKEKEKYIEAYHKEVNQLLKMNTWDTDKYYDRKEIDPKRVINSMFIFNRKRDGTHKARFVARGDIQHPDTYDSGMQSNTVHHYALMTSLSLALDNNYYITQLDISSAYLYADIKEELYIRPPPHLGMNDKLIRLKKSLYGLKQSGANWYETIKSYLIKQCGMEEVRGWSCVFKNSQVTICLFVDDMILFSKDLNANKKIITTLKKQYDTKIINLGESDNEIQYDILGLEIKYQRGKYMKLGMENSLTEKIPKLNVPLNPKGRKLSAPGQPGLYIDQDELEIDEDEYKEKVHEMQKLIGLASYVGYKFRFDLLYYINTLAQHILFPSRQVLDMTYELIQFMWDTRDKQLIWHKNKPTEPDNKLVAISDASYGNQPYYKSQIGNIYLLNGKVIGGKSTKASLTCTSTTEAEIHAISESVPLLNNLSHLVQELNKKPITKGLLTDSKSTISIIISNNEEKFRNRFFGTKAMRLRDEVSGNHLHVCYIETKKNIADVMTKPLPIKTFKLLTNKWIH</sequence>
<gene>
    <name type="primary">TY1B-PR2</name>
    <name type="synonym">YPRWTy1-3 POL</name>
    <name type="ordered locus">YPR158W-B</name>
    <name type="ORF">P9584.3c</name>
</gene>
<keyword id="KW-0064">Aspartyl protease</keyword>
<keyword id="KW-0067">ATP-binding</keyword>
<keyword id="KW-0963">Cytoplasm</keyword>
<keyword id="KW-0229">DNA integration</keyword>
<keyword id="KW-0233">DNA recombination</keyword>
<keyword id="KW-0238">DNA-binding</keyword>
<keyword id="KW-0239">DNA-directed DNA polymerase</keyword>
<keyword id="KW-0255">Endonuclease</keyword>
<keyword id="KW-0378">Hydrolase</keyword>
<keyword id="KW-0460">Magnesium</keyword>
<keyword id="KW-0479">Metal-binding</keyword>
<keyword id="KW-0511">Multifunctional enzyme</keyword>
<keyword id="KW-0540">Nuclease</keyword>
<keyword id="KW-0547">Nucleotide-binding</keyword>
<keyword id="KW-0548">Nucleotidyltransferase</keyword>
<keyword id="KW-0539">Nucleus</keyword>
<keyword id="KW-0645">Protease</keyword>
<keyword id="KW-1185">Reference proteome</keyword>
<keyword id="KW-0688">Ribosomal frameshifting</keyword>
<keyword id="KW-0694">RNA-binding</keyword>
<keyword id="KW-0695">RNA-directed DNA polymerase</keyword>
<keyword id="KW-0808">Transferase</keyword>
<keyword id="KW-0814">Transposable element</keyword>
<keyword id="KW-0815">Transposition</keyword>
<keyword id="KW-1188">Viral release from host cell</keyword>
<keyword id="KW-0917">Virion maturation</keyword>
<keyword id="KW-0862">Zinc</keyword>
<keyword id="KW-0863">Zinc-finger</keyword>
<feature type="chain" id="PRO_0000279179" description="Transposon Ty1-PR2 Gag-Pol polyprotein">
    <location>
        <begin position="1"/>
        <end position="1756"/>
    </location>
</feature>
<feature type="chain" id="PRO_0000279180" description="Capsid protein" evidence="1">
    <location>
        <begin position="1"/>
        <end position="401"/>
    </location>
</feature>
<feature type="chain" id="PRO_0000279181" description="Ty1 protease" evidence="1">
    <location>
        <begin position="402"/>
        <end position="582"/>
    </location>
</feature>
<feature type="chain" id="PRO_0000279182" description="Integrase" evidence="1">
    <location>
        <begin position="583"/>
        <end position="1218"/>
    </location>
</feature>
<feature type="chain" id="PRO_0000279183" description="Reverse transcriptase/ribonuclease H" evidence="1">
    <location>
        <begin position="1219"/>
        <end position="1756"/>
    </location>
</feature>
<feature type="domain" description="Integrase catalytic" evidence="2">
    <location>
        <begin position="660"/>
        <end position="836"/>
    </location>
</feature>
<feature type="domain" description="Reverse transcriptase Ty1/copia-type">
    <location>
        <begin position="1339"/>
        <end position="1477"/>
    </location>
</feature>
<feature type="domain" description="RNase H Ty1/copia-type">
    <location>
        <begin position="1611"/>
        <end position="1753"/>
    </location>
</feature>
<feature type="region of interest" description="Disordered" evidence="4">
    <location>
        <begin position="1"/>
        <end position="93"/>
    </location>
</feature>
<feature type="region of interest" description="Disordered" evidence="4">
    <location>
        <begin position="126"/>
        <end position="173"/>
    </location>
</feature>
<feature type="region of interest" description="RNA-binding" evidence="1">
    <location>
        <begin position="299"/>
        <end position="401"/>
    </location>
</feature>
<feature type="region of interest" description="Disordered" evidence="4">
    <location>
        <begin position="352"/>
        <end position="421"/>
    </location>
</feature>
<feature type="region of interest" description="Integrase-type zinc finger-like">
    <location>
        <begin position="583"/>
        <end position="640"/>
    </location>
</feature>
<feature type="region of interest" description="Disordered" evidence="4">
    <location>
        <begin position="957"/>
        <end position="1088"/>
    </location>
</feature>
<feature type="region of interest" description="Disordered" evidence="4">
    <location>
        <begin position="1093"/>
        <end position="1112"/>
    </location>
</feature>
<feature type="region of interest" description="Disordered" evidence="4">
    <location>
        <begin position="1131"/>
        <end position="1188"/>
    </location>
</feature>
<feature type="short sequence motif" description="Bipartite nuclear localization signal" evidence="1">
    <location>
        <begin position="1179"/>
        <end position="1213"/>
    </location>
</feature>
<feature type="compositionally biased region" description="Polar residues" evidence="4">
    <location>
        <begin position="1"/>
        <end position="10"/>
    </location>
</feature>
<feature type="compositionally biased region" description="Polar residues" evidence="4">
    <location>
        <begin position="48"/>
        <end position="60"/>
    </location>
</feature>
<feature type="compositionally biased region" description="Polar residues" evidence="4">
    <location>
        <begin position="127"/>
        <end position="152"/>
    </location>
</feature>
<feature type="compositionally biased region" description="Low complexity" evidence="4">
    <location>
        <begin position="153"/>
        <end position="165"/>
    </location>
</feature>
<feature type="compositionally biased region" description="Low complexity" evidence="4">
    <location>
        <begin position="402"/>
        <end position="418"/>
    </location>
</feature>
<feature type="compositionally biased region" description="Low complexity" evidence="4">
    <location>
        <begin position="961"/>
        <end position="970"/>
    </location>
</feature>
<feature type="compositionally biased region" description="Polar residues" evidence="4">
    <location>
        <begin position="1006"/>
        <end position="1016"/>
    </location>
</feature>
<feature type="compositionally biased region" description="Basic and acidic residues" evidence="4">
    <location>
        <begin position="1039"/>
        <end position="1054"/>
    </location>
</feature>
<feature type="compositionally biased region" description="Polar residues" evidence="4">
    <location>
        <begin position="1055"/>
        <end position="1083"/>
    </location>
</feature>
<feature type="compositionally biased region" description="Polar residues" evidence="4">
    <location>
        <begin position="1102"/>
        <end position="1112"/>
    </location>
</feature>
<feature type="active site" description="For protease activity; shared with dimeric partner" evidence="3">
    <location>
        <position position="461"/>
    </location>
</feature>
<feature type="binding site" evidence="2">
    <location>
        <position position="671"/>
    </location>
    <ligand>
        <name>Mg(2+)</name>
        <dbReference type="ChEBI" id="CHEBI:18420"/>
        <label>1</label>
        <note>catalytic; for integrase activity</note>
    </ligand>
</feature>
<feature type="binding site" evidence="2">
    <location>
        <position position="736"/>
    </location>
    <ligand>
        <name>Mg(2+)</name>
        <dbReference type="ChEBI" id="CHEBI:18420"/>
        <label>1</label>
        <note>catalytic; for integrase activity</note>
    </ligand>
</feature>
<feature type="binding site" evidence="2">
    <location>
        <position position="1347"/>
    </location>
    <ligand>
        <name>Mg(2+)</name>
        <dbReference type="ChEBI" id="CHEBI:18420"/>
        <label>2</label>
        <note>catalytic; for reverse transcriptase activity</note>
    </ligand>
</feature>
<feature type="binding site" evidence="2">
    <location>
        <position position="1428"/>
    </location>
    <ligand>
        <name>Mg(2+)</name>
        <dbReference type="ChEBI" id="CHEBI:18420"/>
        <label>2</label>
        <note>catalytic; for reverse transcriptase activity</note>
    </ligand>
</feature>
<feature type="binding site" evidence="2">
    <location>
        <position position="1429"/>
    </location>
    <ligand>
        <name>Mg(2+)</name>
        <dbReference type="ChEBI" id="CHEBI:18420"/>
        <label>2</label>
        <note>catalytic; for reverse transcriptase activity</note>
    </ligand>
</feature>
<feature type="binding site" evidence="2">
    <location>
        <position position="1611"/>
    </location>
    <ligand>
        <name>Mg(2+)</name>
        <dbReference type="ChEBI" id="CHEBI:18420"/>
        <label>3</label>
        <note>catalytic; for RNase H activity</note>
    </ligand>
</feature>
<feature type="binding site" evidence="2">
    <location>
        <position position="1653"/>
    </location>
    <ligand>
        <name>Mg(2+)</name>
        <dbReference type="ChEBI" id="CHEBI:18420"/>
        <label>3</label>
        <note>catalytic; for RNase H activity</note>
    </ligand>
</feature>
<feature type="binding site" evidence="2">
    <location>
        <position position="1686"/>
    </location>
    <ligand>
        <name>Mg(2+)</name>
        <dbReference type="ChEBI" id="CHEBI:18420"/>
        <label>3</label>
        <note>catalytic; for RNase H activity</note>
    </ligand>
</feature>
<feature type="site" description="Cleavage; by Ty1 protease" evidence="1">
    <location>
        <begin position="401"/>
        <end position="402"/>
    </location>
</feature>
<feature type="site" description="Cleavage; by Ty1 protease" evidence="1">
    <location>
        <begin position="582"/>
        <end position="583"/>
    </location>
</feature>
<feature type="site" description="Cleavage; by Ty1 protease" evidence="1">
    <location>
        <begin position="1218"/>
        <end position="1219"/>
    </location>
</feature>
<evidence type="ECO:0000250" key="1"/>
<evidence type="ECO:0000255" key="2">
    <source>
        <dbReference type="PROSITE-ProRule" id="PRU00457"/>
    </source>
</evidence>
<evidence type="ECO:0000255" key="3">
    <source>
        <dbReference type="PROSITE-ProRule" id="PRU10094"/>
    </source>
</evidence>
<evidence type="ECO:0000256" key="4">
    <source>
        <dbReference type="SAM" id="MobiDB-lite"/>
    </source>
</evidence>
<name>YP13B_YEAST</name>
<protein>
    <recommendedName>
        <fullName>Transposon Ty1-PR2 Gag-Pol polyprotein</fullName>
    </recommendedName>
    <alternativeName>
        <fullName>Gag-Pol-p199</fullName>
    </alternativeName>
    <alternativeName>
        <fullName>TY1A-TY1B</fullName>
    </alternativeName>
    <alternativeName>
        <fullName>Transposon Ty1 TYA-TYB polyprotein</fullName>
    </alternativeName>
    <alternativeName>
        <fullName>p190</fullName>
    </alternativeName>
    <component>
        <recommendedName>
            <fullName>Capsid protein</fullName>
            <shortName>CA</shortName>
        </recommendedName>
        <alternativeName>
            <fullName>Gag-p45</fullName>
        </alternativeName>
        <alternativeName>
            <fullName>p54</fullName>
        </alternativeName>
    </component>
    <component>
        <recommendedName>
            <fullName>Ty1 protease</fullName>
            <shortName>PR</shortName>
            <ecNumber>3.4.23.-</ecNumber>
        </recommendedName>
        <alternativeName>
            <fullName>Pol-p20</fullName>
        </alternativeName>
        <alternativeName>
            <fullName>p23</fullName>
        </alternativeName>
    </component>
    <component>
        <recommendedName>
            <fullName>Integrase</fullName>
            <shortName>IN</shortName>
        </recommendedName>
        <alternativeName>
            <fullName>Pol-p71</fullName>
        </alternativeName>
        <alternativeName>
            <fullName>p84</fullName>
        </alternativeName>
        <alternativeName>
            <fullName>p90</fullName>
        </alternativeName>
    </component>
    <component>
        <recommendedName>
            <fullName>Reverse transcriptase/ribonuclease H</fullName>
            <shortName>RT</shortName>
            <shortName>RT-RH</shortName>
            <ecNumber>2.7.7.49</ecNumber>
            <ecNumber>2.7.7.7</ecNumber>
            <ecNumber>3.1.26.4</ecNumber>
        </recommendedName>
        <alternativeName>
            <fullName>Pol-p63</fullName>
        </alternativeName>
        <alternativeName>
            <fullName>p60</fullName>
        </alternativeName>
    </component>
</protein>
<accession>P0C2J0</accession>
<accession>D6W4F5</accession>
<dbReference type="EC" id="3.4.23.-"/>
<dbReference type="EC" id="2.7.7.49"/>
<dbReference type="EC" id="2.7.7.7"/>
<dbReference type="EC" id="3.1.26.4"/>
<dbReference type="EMBL" id="U28371">
    <property type="status" value="NOT_ANNOTATED_CDS"/>
    <property type="molecule type" value="Genomic_DNA"/>
</dbReference>
<dbReference type="EMBL" id="BK006949">
    <property type="protein sequence ID" value="DAA11571.1"/>
    <property type="molecule type" value="Genomic_DNA"/>
</dbReference>
<dbReference type="PIR" id="S69983">
    <property type="entry name" value="S69983"/>
</dbReference>
<dbReference type="RefSeq" id="NP_058193.1">
    <molecule id="P0C2J0-1"/>
    <property type="nucleotide sequence ID" value="NM_001184398.2"/>
</dbReference>
<dbReference type="SMR" id="P0C2J0"/>
<dbReference type="BioGRID" id="36327">
    <property type="interactions" value="9"/>
</dbReference>
<dbReference type="FunCoup" id="P0C2J0">
    <property type="interactions" value="76"/>
</dbReference>
<dbReference type="IntAct" id="P0C2J0">
    <property type="interactions" value="2"/>
</dbReference>
<dbReference type="MINT" id="P0C2J0"/>
<dbReference type="GlyGen" id="P0C2J0">
    <property type="glycosylation" value="3 sites"/>
</dbReference>
<dbReference type="PaxDb" id="4932-YPR158W-B"/>
<dbReference type="PeptideAtlas" id="P0C2J0"/>
<dbReference type="GeneID" id="856283"/>
<dbReference type="KEGG" id="sce:YPR158W-B"/>
<dbReference type="AGR" id="SGD:S000007364"/>
<dbReference type="SGD" id="S000007364">
    <property type="gene designation" value="YPR158W-B"/>
</dbReference>
<dbReference type="VEuPathDB" id="FungiDB:YPR158W-B"/>
<dbReference type="eggNOG" id="KOG0017">
    <property type="taxonomic scope" value="Eukaryota"/>
</dbReference>
<dbReference type="HOGENOM" id="CLU_244151_0_0_1"/>
<dbReference type="InParanoid" id="P0C2J0"/>
<dbReference type="OrthoDB" id="5423336at2759"/>
<dbReference type="Proteomes" id="UP000002311">
    <property type="component" value="Chromosome XVI"/>
</dbReference>
<dbReference type="RNAct" id="P0C2J0">
    <property type="molecule type" value="protein"/>
</dbReference>
<dbReference type="GO" id="GO:0005737">
    <property type="term" value="C:cytoplasm"/>
    <property type="evidence" value="ECO:0007669"/>
    <property type="project" value="UniProtKB-SubCell"/>
</dbReference>
<dbReference type="GO" id="GO:0005634">
    <property type="term" value="C:nucleus"/>
    <property type="evidence" value="ECO:0000314"/>
    <property type="project" value="SGD"/>
</dbReference>
<dbReference type="GO" id="GO:0004190">
    <property type="term" value="F:aspartic-type endopeptidase activity"/>
    <property type="evidence" value="ECO:0007669"/>
    <property type="project" value="UniProtKB-KW"/>
</dbReference>
<dbReference type="GO" id="GO:0005524">
    <property type="term" value="F:ATP binding"/>
    <property type="evidence" value="ECO:0007669"/>
    <property type="project" value="UniProtKB-KW"/>
</dbReference>
<dbReference type="GO" id="GO:0003677">
    <property type="term" value="F:DNA binding"/>
    <property type="evidence" value="ECO:0007669"/>
    <property type="project" value="UniProtKB-KW"/>
</dbReference>
<dbReference type="GO" id="GO:0003887">
    <property type="term" value="F:DNA-directed DNA polymerase activity"/>
    <property type="evidence" value="ECO:0007669"/>
    <property type="project" value="UniProtKB-KW"/>
</dbReference>
<dbReference type="GO" id="GO:0003723">
    <property type="term" value="F:RNA binding"/>
    <property type="evidence" value="ECO:0007669"/>
    <property type="project" value="UniProtKB-KW"/>
</dbReference>
<dbReference type="GO" id="GO:0003964">
    <property type="term" value="F:RNA-directed DNA polymerase activity"/>
    <property type="evidence" value="ECO:0007669"/>
    <property type="project" value="UniProtKB-KW"/>
</dbReference>
<dbReference type="GO" id="GO:0004523">
    <property type="term" value="F:RNA-DNA hybrid ribonuclease activity"/>
    <property type="evidence" value="ECO:0007669"/>
    <property type="project" value="UniProtKB-EC"/>
</dbReference>
<dbReference type="GO" id="GO:0008270">
    <property type="term" value="F:zinc ion binding"/>
    <property type="evidence" value="ECO:0007669"/>
    <property type="project" value="UniProtKB-KW"/>
</dbReference>
<dbReference type="GO" id="GO:0015074">
    <property type="term" value="P:DNA integration"/>
    <property type="evidence" value="ECO:0007669"/>
    <property type="project" value="UniProtKB-KW"/>
</dbReference>
<dbReference type="GO" id="GO:0006310">
    <property type="term" value="P:DNA recombination"/>
    <property type="evidence" value="ECO:0007669"/>
    <property type="project" value="UniProtKB-KW"/>
</dbReference>
<dbReference type="GO" id="GO:0006508">
    <property type="term" value="P:proteolysis"/>
    <property type="evidence" value="ECO:0007669"/>
    <property type="project" value="UniProtKB-KW"/>
</dbReference>
<dbReference type="GO" id="GO:0032196">
    <property type="term" value="P:transposition"/>
    <property type="evidence" value="ECO:0007669"/>
    <property type="project" value="UniProtKB-KW"/>
</dbReference>
<dbReference type="GO" id="GO:0075523">
    <property type="term" value="P:viral translational frameshifting"/>
    <property type="evidence" value="ECO:0007669"/>
    <property type="project" value="UniProtKB-KW"/>
</dbReference>
<dbReference type="CDD" id="cd09272">
    <property type="entry name" value="RNase_HI_RT_Ty1"/>
    <property type="match status" value="1"/>
</dbReference>
<dbReference type="FunFam" id="3.30.420.10:FF:000050">
    <property type="entry name" value="Transposon Ty2-DR3 Gag-Pol polyprotein"/>
    <property type="match status" value="1"/>
</dbReference>
<dbReference type="Gene3D" id="3.30.420.10">
    <property type="entry name" value="Ribonuclease H-like superfamily/Ribonuclease H"/>
    <property type="match status" value="1"/>
</dbReference>
<dbReference type="InterPro" id="IPR001969">
    <property type="entry name" value="Aspartic_peptidase_AS"/>
</dbReference>
<dbReference type="InterPro" id="IPR043502">
    <property type="entry name" value="DNA/RNA_pol_sf"/>
</dbReference>
<dbReference type="InterPro" id="IPR001584">
    <property type="entry name" value="Integrase_cat-core"/>
</dbReference>
<dbReference type="InterPro" id="IPR039537">
    <property type="entry name" value="Retrotran_Ty1/copia-like"/>
</dbReference>
<dbReference type="InterPro" id="IPR012337">
    <property type="entry name" value="RNaseH-like_sf"/>
</dbReference>
<dbReference type="InterPro" id="IPR036397">
    <property type="entry name" value="RNaseH_sf"/>
</dbReference>
<dbReference type="InterPro" id="IPR013103">
    <property type="entry name" value="RVT_2"/>
</dbReference>
<dbReference type="InterPro" id="IPR015820">
    <property type="entry name" value="TYA"/>
</dbReference>
<dbReference type="PANTHER" id="PTHR42648">
    <property type="entry name" value="TRANSPOSASE, PUTATIVE-RELATED"/>
    <property type="match status" value="1"/>
</dbReference>
<dbReference type="PANTHER" id="PTHR42648:SF11">
    <property type="entry name" value="TRANSPOSON TY4-P GAG-POL POLYPROTEIN"/>
    <property type="match status" value="1"/>
</dbReference>
<dbReference type="Pfam" id="PF00665">
    <property type="entry name" value="rve"/>
    <property type="match status" value="1"/>
</dbReference>
<dbReference type="Pfam" id="PF07727">
    <property type="entry name" value="RVT_2"/>
    <property type="match status" value="1"/>
</dbReference>
<dbReference type="Pfam" id="PF01021">
    <property type="entry name" value="TYA"/>
    <property type="match status" value="1"/>
</dbReference>
<dbReference type="SUPFAM" id="SSF56672">
    <property type="entry name" value="DNA/RNA polymerases"/>
    <property type="match status" value="1"/>
</dbReference>
<dbReference type="SUPFAM" id="SSF53098">
    <property type="entry name" value="Ribonuclease H-like"/>
    <property type="match status" value="1"/>
</dbReference>
<dbReference type="PROSITE" id="PS00141">
    <property type="entry name" value="ASP_PROTEASE"/>
    <property type="match status" value="1"/>
</dbReference>
<dbReference type="PROSITE" id="PS50994">
    <property type="entry name" value="INTEGRASE"/>
    <property type="match status" value="1"/>
</dbReference>
<proteinExistence type="inferred from homology"/>
<comment type="function">
    <text evidence="1">Capsid protein (CA) is the structural component of the virus-like particle (VLP), forming the shell that encapsulates the retrotransposons dimeric RNA genome. The particles are assembled from trimer-clustered units and there are holes in the capsid shells that allow for the diffusion of macromolecules. CA also has nucleocapsid-like chaperone activity, promoting primer tRNA(i)-Met annealing to the multipartite primer-binding site (PBS), dimerization of Ty1 RNA and initiation of reverse transcription (By similarity).</text>
</comment>
<comment type="function">
    <text evidence="1">The aspartyl protease (PR) mediates the proteolytic cleavages of the Gag and Gag-Pol polyproteins after assembly of the VLP.</text>
</comment>
<comment type="function">
    <text evidence="1">Reverse transcriptase/ribonuclease H (RT) is a multifunctional enzyme that catalyzes the conversion of the retro-elements RNA genome into dsDNA within the VLP. The enzyme displays a DNA polymerase activity that can copy either DNA or RNA templates, and a ribonuclease H (RNase H) activity that cleaves the RNA strand of RNA-DNA heteroduplexes during plus-strand synthesis and hydrolyzes RNA primers. The conversion leads to a linear dsDNA copy of the retrotransposon that includes long terminal repeats (LTRs) at both ends (By similarity).</text>
</comment>
<comment type="function">
    <text evidence="1">Integrase (IN) targets the VLP to the nucleus, where a subparticle preintegration complex (PIC) containing at least integrase and the newly synthesized dsDNA copy of the retrotransposon must transit the nuclear membrane. Once in the nucleus, integrase performs the integration of the dsDNA into the host genome (By similarity).</text>
</comment>
<comment type="catalytic activity">
    <reaction>
        <text>DNA(n) + a 2'-deoxyribonucleoside 5'-triphosphate = DNA(n+1) + diphosphate</text>
        <dbReference type="Rhea" id="RHEA:22508"/>
        <dbReference type="Rhea" id="RHEA-COMP:17339"/>
        <dbReference type="Rhea" id="RHEA-COMP:17340"/>
        <dbReference type="ChEBI" id="CHEBI:33019"/>
        <dbReference type="ChEBI" id="CHEBI:61560"/>
        <dbReference type="ChEBI" id="CHEBI:173112"/>
        <dbReference type="EC" id="2.7.7.49"/>
    </reaction>
</comment>
<comment type="catalytic activity">
    <reaction>
        <text>DNA(n) + a 2'-deoxyribonucleoside 5'-triphosphate = DNA(n+1) + diphosphate</text>
        <dbReference type="Rhea" id="RHEA:22508"/>
        <dbReference type="Rhea" id="RHEA-COMP:17339"/>
        <dbReference type="Rhea" id="RHEA-COMP:17340"/>
        <dbReference type="ChEBI" id="CHEBI:33019"/>
        <dbReference type="ChEBI" id="CHEBI:61560"/>
        <dbReference type="ChEBI" id="CHEBI:173112"/>
        <dbReference type="EC" id="2.7.7.7"/>
    </reaction>
</comment>
<comment type="catalytic activity">
    <reaction>
        <text>Endonucleolytic cleavage to 5'-phosphomonoester.</text>
        <dbReference type="EC" id="3.1.26.4"/>
    </reaction>
</comment>
<comment type="subunit">
    <text evidence="1">The capsid protein forms a homotrimer, from which the VLPs are assembled. The protease is a homodimer, whose active site consists of two apposed aspartic acid residues (By similarity).</text>
</comment>
<comment type="subcellular location">
    <subcellularLocation>
        <location>Cytoplasm</location>
    </subcellularLocation>
    <subcellularLocation>
        <location evidence="1">Nucleus</location>
    </subcellularLocation>
</comment>
<comment type="alternative products">
    <event type="ribosomal frameshifting"/>
    <isoform>
        <id>P0C2J0-1</id>
        <name>Transposon Ty1-PR2 Gag-Pol polyprotein</name>
        <sequence type="displayed"/>
    </isoform>
    <isoform>
        <id>P0CX60-1</id>
        <name>Transposon Ty1-PR2 Gag polyprotein</name>
        <sequence type="external"/>
    </isoform>
    <text evidence="1">The Gag-Pol polyprotein is generated by a +1 ribosomal frameshift. The ratio of Gag:Gag-Pol varies between 20:1 and 5:1 (By similarity).</text>
</comment>
<comment type="domain">
    <text evidence="1">The C-terminal RNA-binding region of CA is sufficient for all its nucleocapsid-like chaperone activities.</text>
</comment>
<comment type="domain">
    <text evidence="1">Integrase core domain contains the D-x(n)-D-x(35)-E motif, named for the phylogenetically conserved glutamic acid and aspartic acid residues and the invariant 35 amino acid spacing between the second and third acidic residues. Each acidic residue of the D,D(35)E motif is independently essential for the 3'-processing and strand transfer activities of purified integrase protein (By similarity).</text>
</comment>
<comment type="PTM">
    <text evidence="1">Initially, virus-like particles (VLPs) are composed of the structural unprocessed proteins Gag and Gag-Pol, and also contain the host initiator methionine tRNA (tRNA(i)-Met) which serves as a primer for minus-strand DNA synthesis, and a dimer of genomic Ty RNA. Processing of the polyproteins occurs within the particle and proceeds by an ordered pathway, called maturation. First, the protease (PR) is released by autocatalytic cleavage of the Gag-Pol polyprotein yielding capsid protein p45 and a Pol-p154 precursor protein. This cleavage is a prerequisite for subsequent processing of Pol-p154 at the remaining sites to release the mature structural and catalytic proteins. Maturation takes place prior to the RT reaction and is required to produce transposition-competent VLPs (By similarity).</text>
</comment>
<comment type="miscellaneous">
    <text>Retrotransposons are mobile genetic entities that are able to replicate via an RNA intermediate and a reverse transcription step. In contrast to retroviruses, retrotransposons are non-infectious, lack an envelope and remain intracellular. Ty1 retrotransposons belong to the copia elements (pseudoviridae).</text>
</comment>
<comment type="miscellaneous">
    <molecule>Isoform Transposon Ty1-PR2 Gag-Pol polyprotein</molecule>
    <text>Produced by +1 ribosomal frameshifting between codon Leu-435 and Gly-436 of the YPR158W-A ORF.</text>
</comment>